<proteinExistence type="inferred from homology"/>
<comment type="function">
    <text evidence="1">Involved in spore and ascus formation. Required for the efficient assembly of the precursors of the prospore membrane to a continuous prospore membrane (By similarity).</text>
</comment>
<comment type="subcellular location">
    <subcellularLocation>
        <location evidence="1">Prospore membrane</location>
        <topology evidence="1">Multi-pass membrane protein</topology>
    </subcellularLocation>
</comment>
<comment type="similarity">
    <text evidence="3">Belongs to the SMA2 family.</text>
</comment>
<dbReference type="EMBL" id="CR380958">
    <property type="protein sequence ID" value="CAG62233.1"/>
    <property type="molecule type" value="Genomic_DNA"/>
</dbReference>
<dbReference type="RefSeq" id="XP_449259.1">
    <property type="nucleotide sequence ID" value="XM_449259.1"/>
</dbReference>
<dbReference type="FunCoup" id="Q6FKI5">
    <property type="interactions" value="18"/>
</dbReference>
<dbReference type="EnsemblFungi" id="CAGL0L11286g-T">
    <property type="protein sequence ID" value="CAGL0L11286g-T-p1"/>
    <property type="gene ID" value="CAGL0L11286g"/>
</dbReference>
<dbReference type="KEGG" id="cgr:2890958"/>
<dbReference type="CGD" id="CAL0135418">
    <property type="gene designation" value="CAGL0L11286g"/>
</dbReference>
<dbReference type="VEuPathDB" id="FungiDB:CAGL0L11286g"/>
<dbReference type="eggNOG" id="ENOG502QW7F">
    <property type="taxonomic scope" value="Eukaryota"/>
</dbReference>
<dbReference type="HOGENOM" id="CLU_776604_0_0_1"/>
<dbReference type="InParanoid" id="Q6FKI5"/>
<dbReference type="OMA" id="TIDMGWS"/>
<dbReference type="Proteomes" id="UP000002428">
    <property type="component" value="Chromosome L"/>
</dbReference>
<dbReference type="GO" id="GO:0005737">
    <property type="term" value="C:cytoplasm"/>
    <property type="evidence" value="ECO:0007669"/>
    <property type="project" value="EnsemblFungi"/>
</dbReference>
<dbReference type="GO" id="GO:0005628">
    <property type="term" value="C:prospore membrane"/>
    <property type="evidence" value="ECO:0007669"/>
    <property type="project" value="UniProtKB-SubCell"/>
</dbReference>
<dbReference type="GO" id="GO:0070583">
    <property type="term" value="P:spore membrane bending pathway"/>
    <property type="evidence" value="ECO:0007669"/>
    <property type="project" value="EnsemblFungi"/>
</dbReference>
<organism>
    <name type="scientific">Candida glabrata (strain ATCC 2001 / BCRC 20586 / JCM 3761 / NBRC 0622 / NRRL Y-65 / CBS 138)</name>
    <name type="common">Yeast</name>
    <name type="synonym">Nakaseomyces glabratus</name>
    <dbReference type="NCBI Taxonomy" id="284593"/>
    <lineage>
        <taxon>Eukaryota</taxon>
        <taxon>Fungi</taxon>
        <taxon>Dikarya</taxon>
        <taxon>Ascomycota</taxon>
        <taxon>Saccharomycotina</taxon>
        <taxon>Saccharomycetes</taxon>
        <taxon>Saccharomycetales</taxon>
        <taxon>Saccharomycetaceae</taxon>
        <taxon>Nakaseomyces</taxon>
    </lineage>
</organism>
<sequence>MLIVKRFILWVLLFFMAITQLLLYLPDFSCSISTGLPLCTPQFNVNIVTGSRTTKDFVSSVRQFLRLISYLAIDMGWSKYLADPHIYNEENLVDTFDTDNLFKINYFGFCKKTSGKTKYCVANGDCGMDVLGILVRDVGLQLGRLTQRYENNTRILGDSLVFTYHLGLSSMRKFLRNDNYRNNAFSKLLLATDDQPYSNTRIKNYAKGVTVAYTLVVVNKIMFYMHLAEITISAAFVVAVLGFGFVLIFGKHHTIMPLLLKGWGSVLMVSSTSSYLATIVYLGTLKLLEPTEMLDTQSQVAGHVLNNDTHSNNWDLLQTTVGSGFVISCFRYIVQCLMLPLVFIAANRYTKAKDFLPAGTEELIKV</sequence>
<accession>Q6FKI5</accession>
<name>SMA2_CANGA</name>
<evidence type="ECO:0000250" key="1"/>
<evidence type="ECO:0000255" key="2"/>
<evidence type="ECO:0000305" key="3"/>
<gene>
    <name type="primary">SMA2</name>
    <name type="ordered locus">CAGL0L11286g</name>
</gene>
<protein>
    <recommendedName>
        <fullName>Spore membrane assembly protein 2</fullName>
    </recommendedName>
</protein>
<keyword id="KW-0472">Membrane</keyword>
<keyword id="KW-1185">Reference proteome</keyword>
<keyword id="KW-0749">Sporulation</keyword>
<keyword id="KW-0812">Transmembrane</keyword>
<keyword id="KW-1133">Transmembrane helix</keyword>
<feature type="chain" id="PRO_0000324501" description="Spore membrane assembly protein 2">
    <location>
        <begin position="1"/>
        <end position="366"/>
    </location>
</feature>
<feature type="topological domain" description="Cytoplasmic" evidence="2">
    <location>
        <begin position="1"/>
        <end position="6"/>
    </location>
</feature>
<feature type="transmembrane region" description="Helical" evidence="2">
    <location>
        <begin position="7"/>
        <end position="27"/>
    </location>
</feature>
<feature type="topological domain" description="Lumenal" evidence="2">
    <location>
        <begin position="28"/>
        <end position="229"/>
    </location>
</feature>
<feature type="transmembrane region" description="Helical" evidence="2">
    <location>
        <begin position="230"/>
        <end position="250"/>
    </location>
</feature>
<feature type="topological domain" description="Cytoplasmic" evidence="2">
    <location>
        <begin position="251"/>
        <end position="261"/>
    </location>
</feature>
<feature type="transmembrane region" description="Helical" evidence="2">
    <location>
        <begin position="262"/>
        <end position="282"/>
    </location>
</feature>
<feature type="topological domain" description="Lumenal" evidence="2">
    <location>
        <begin position="283"/>
        <end position="324"/>
    </location>
</feature>
<feature type="transmembrane region" description="Helical" evidence="2">
    <location>
        <begin position="325"/>
        <end position="345"/>
    </location>
</feature>
<feature type="topological domain" description="Cytoplasmic" evidence="2">
    <location>
        <begin position="346"/>
        <end position="366"/>
    </location>
</feature>
<reference key="1">
    <citation type="journal article" date="2004" name="Nature">
        <title>Genome evolution in yeasts.</title>
        <authorList>
            <person name="Dujon B."/>
            <person name="Sherman D."/>
            <person name="Fischer G."/>
            <person name="Durrens P."/>
            <person name="Casaregola S."/>
            <person name="Lafontaine I."/>
            <person name="de Montigny J."/>
            <person name="Marck C."/>
            <person name="Neuveglise C."/>
            <person name="Talla E."/>
            <person name="Goffard N."/>
            <person name="Frangeul L."/>
            <person name="Aigle M."/>
            <person name="Anthouard V."/>
            <person name="Babour A."/>
            <person name="Barbe V."/>
            <person name="Barnay S."/>
            <person name="Blanchin S."/>
            <person name="Beckerich J.-M."/>
            <person name="Beyne E."/>
            <person name="Bleykasten C."/>
            <person name="Boisrame A."/>
            <person name="Boyer J."/>
            <person name="Cattolico L."/>
            <person name="Confanioleri F."/>
            <person name="de Daruvar A."/>
            <person name="Despons L."/>
            <person name="Fabre E."/>
            <person name="Fairhead C."/>
            <person name="Ferry-Dumazet H."/>
            <person name="Groppi A."/>
            <person name="Hantraye F."/>
            <person name="Hennequin C."/>
            <person name="Jauniaux N."/>
            <person name="Joyet P."/>
            <person name="Kachouri R."/>
            <person name="Kerrest A."/>
            <person name="Koszul R."/>
            <person name="Lemaire M."/>
            <person name="Lesur I."/>
            <person name="Ma L."/>
            <person name="Muller H."/>
            <person name="Nicaud J.-M."/>
            <person name="Nikolski M."/>
            <person name="Oztas S."/>
            <person name="Ozier-Kalogeropoulos O."/>
            <person name="Pellenz S."/>
            <person name="Potier S."/>
            <person name="Richard G.-F."/>
            <person name="Straub M.-L."/>
            <person name="Suleau A."/>
            <person name="Swennen D."/>
            <person name="Tekaia F."/>
            <person name="Wesolowski-Louvel M."/>
            <person name="Westhof E."/>
            <person name="Wirth B."/>
            <person name="Zeniou-Meyer M."/>
            <person name="Zivanovic Y."/>
            <person name="Bolotin-Fukuhara M."/>
            <person name="Thierry A."/>
            <person name="Bouchier C."/>
            <person name="Caudron B."/>
            <person name="Scarpelli C."/>
            <person name="Gaillardin C."/>
            <person name="Weissenbach J."/>
            <person name="Wincker P."/>
            <person name="Souciet J.-L."/>
        </authorList>
    </citation>
    <scope>NUCLEOTIDE SEQUENCE [LARGE SCALE GENOMIC DNA]</scope>
    <source>
        <strain>ATCC 2001 / BCRC 20586 / JCM 3761 / NBRC 0622 / NRRL Y-65 / CBS 138</strain>
    </source>
</reference>